<sequence length="98" mass="10779">MPGITREEVAHLARLARLELKPEELEHFAGQLDDIIGAVARVSEVADQDVPPTSHPLPLTNVMRPDEVRPSLTPEQALSGAPAQEQQRFKVPQILGEE</sequence>
<name>GATC_STRCO</name>
<gene>
    <name type="primary">gatC</name>
    <name type="ordered locus">SCO5498</name>
    <name type="ORF">SC8D9.10</name>
</gene>
<protein>
    <recommendedName>
        <fullName>Glutamyl-tRNA(Gln) amidotransferase subunit C</fullName>
        <shortName>Glu-ADT subunit C</shortName>
        <ecNumber>6.3.5.-</ecNumber>
    </recommendedName>
</protein>
<reference key="1">
    <citation type="journal article" date="2002" name="Nature">
        <title>Complete genome sequence of the model actinomycete Streptomyces coelicolor A3(2).</title>
        <authorList>
            <person name="Bentley S.D."/>
            <person name="Chater K.F."/>
            <person name="Cerdeno-Tarraga A.-M."/>
            <person name="Challis G.L."/>
            <person name="Thomson N.R."/>
            <person name="James K.D."/>
            <person name="Harris D.E."/>
            <person name="Quail M.A."/>
            <person name="Kieser H."/>
            <person name="Harper D."/>
            <person name="Bateman A."/>
            <person name="Brown S."/>
            <person name="Chandra G."/>
            <person name="Chen C.W."/>
            <person name="Collins M."/>
            <person name="Cronin A."/>
            <person name="Fraser A."/>
            <person name="Goble A."/>
            <person name="Hidalgo J."/>
            <person name="Hornsby T."/>
            <person name="Howarth S."/>
            <person name="Huang C.-H."/>
            <person name="Kieser T."/>
            <person name="Larke L."/>
            <person name="Murphy L.D."/>
            <person name="Oliver K."/>
            <person name="O'Neil S."/>
            <person name="Rabbinowitsch E."/>
            <person name="Rajandream M.A."/>
            <person name="Rutherford K.M."/>
            <person name="Rutter S."/>
            <person name="Seeger K."/>
            <person name="Saunders D."/>
            <person name="Sharp S."/>
            <person name="Squares R."/>
            <person name="Squares S."/>
            <person name="Taylor K."/>
            <person name="Warren T."/>
            <person name="Wietzorrek A."/>
            <person name="Woodward J.R."/>
            <person name="Barrell B.G."/>
            <person name="Parkhill J."/>
            <person name="Hopwood D.A."/>
        </authorList>
    </citation>
    <scope>NUCLEOTIDE SEQUENCE [LARGE SCALE GENOMIC DNA]</scope>
    <source>
        <strain>ATCC BAA-471 / A3(2) / M145</strain>
    </source>
</reference>
<comment type="function">
    <text evidence="1">Allows the formation of correctly charged Asn-tRNA(Asn) or Gln-tRNA(Gln) through the transamidation of misacylated Asp-tRNA(Asn) or Glu-tRNA(Gln) in organisms which lack either or both of asparaginyl-tRNA or glutaminyl-tRNA synthetases. The reaction takes place in the presence of glutamine and ATP through an activated phospho-Asp-tRNA(Asn) or phospho-Glu-tRNA(Gln) (By similarity).</text>
</comment>
<comment type="catalytic activity">
    <reaction>
        <text>L-glutamyl-tRNA(Gln) + L-glutamine + ATP + H2O = L-glutaminyl-tRNA(Gln) + L-glutamate + ADP + phosphate + H(+)</text>
        <dbReference type="Rhea" id="RHEA:17521"/>
        <dbReference type="Rhea" id="RHEA-COMP:9681"/>
        <dbReference type="Rhea" id="RHEA-COMP:9684"/>
        <dbReference type="ChEBI" id="CHEBI:15377"/>
        <dbReference type="ChEBI" id="CHEBI:15378"/>
        <dbReference type="ChEBI" id="CHEBI:29985"/>
        <dbReference type="ChEBI" id="CHEBI:30616"/>
        <dbReference type="ChEBI" id="CHEBI:43474"/>
        <dbReference type="ChEBI" id="CHEBI:58359"/>
        <dbReference type="ChEBI" id="CHEBI:78520"/>
        <dbReference type="ChEBI" id="CHEBI:78521"/>
        <dbReference type="ChEBI" id="CHEBI:456216"/>
    </reaction>
</comment>
<comment type="catalytic activity">
    <reaction>
        <text>L-aspartyl-tRNA(Asn) + L-glutamine + ATP + H2O = L-asparaginyl-tRNA(Asn) + L-glutamate + ADP + phosphate + 2 H(+)</text>
        <dbReference type="Rhea" id="RHEA:14513"/>
        <dbReference type="Rhea" id="RHEA-COMP:9674"/>
        <dbReference type="Rhea" id="RHEA-COMP:9677"/>
        <dbReference type="ChEBI" id="CHEBI:15377"/>
        <dbReference type="ChEBI" id="CHEBI:15378"/>
        <dbReference type="ChEBI" id="CHEBI:29985"/>
        <dbReference type="ChEBI" id="CHEBI:30616"/>
        <dbReference type="ChEBI" id="CHEBI:43474"/>
        <dbReference type="ChEBI" id="CHEBI:58359"/>
        <dbReference type="ChEBI" id="CHEBI:78515"/>
        <dbReference type="ChEBI" id="CHEBI:78516"/>
        <dbReference type="ChEBI" id="CHEBI:456216"/>
    </reaction>
</comment>
<comment type="subunit">
    <text evidence="1">Heterotrimer of A, B and C subunits.</text>
</comment>
<comment type="similarity">
    <text evidence="3">Belongs to the GatC family.</text>
</comment>
<evidence type="ECO:0000250" key="1"/>
<evidence type="ECO:0000256" key="2">
    <source>
        <dbReference type="SAM" id="MobiDB-lite"/>
    </source>
</evidence>
<evidence type="ECO:0000305" key="3"/>
<accession>Q9Z581</accession>
<keyword id="KW-0067">ATP-binding</keyword>
<keyword id="KW-0436">Ligase</keyword>
<keyword id="KW-0547">Nucleotide-binding</keyword>
<keyword id="KW-0648">Protein biosynthesis</keyword>
<keyword id="KW-1185">Reference proteome</keyword>
<feature type="chain" id="PRO_0000105341" description="Glutamyl-tRNA(Gln) amidotransferase subunit C">
    <location>
        <begin position="1"/>
        <end position="98"/>
    </location>
</feature>
<feature type="region of interest" description="Disordered" evidence="2">
    <location>
        <begin position="47"/>
        <end position="98"/>
    </location>
</feature>
<organism>
    <name type="scientific">Streptomyces coelicolor (strain ATCC BAA-471 / A3(2) / M145)</name>
    <dbReference type="NCBI Taxonomy" id="100226"/>
    <lineage>
        <taxon>Bacteria</taxon>
        <taxon>Bacillati</taxon>
        <taxon>Actinomycetota</taxon>
        <taxon>Actinomycetes</taxon>
        <taxon>Kitasatosporales</taxon>
        <taxon>Streptomycetaceae</taxon>
        <taxon>Streptomyces</taxon>
        <taxon>Streptomyces albidoflavus group</taxon>
    </lineage>
</organism>
<proteinExistence type="inferred from homology"/>
<dbReference type="EC" id="6.3.5.-"/>
<dbReference type="EMBL" id="AL939124">
    <property type="protein sequence ID" value="CAB37574.1"/>
    <property type="molecule type" value="Genomic_DNA"/>
</dbReference>
<dbReference type="PIR" id="T35814">
    <property type="entry name" value="T35814"/>
</dbReference>
<dbReference type="RefSeq" id="NP_629633.1">
    <property type="nucleotide sequence ID" value="NC_003888.3"/>
</dbReference>
<dbReference type="RefSeq" id="WP_003973500.1">
    <property type="nucleotide sequence ID" value="NZ_VNID01000011.1"/>
</dbReference>
<dbReference type="SMR" id="Q9Z581"/>
<dbReference type="FunCoup" id="Q9Z581">
    <property type="interactions" value="75"/>
</dbReference>
<dbReference type="STRING" id="100226.gene:17763150"/>
<dbReference type="PaxDb" id="100226-SCO5498"/>
<dbReference type="GeneID" id="97462136"/>
<dbReference type="KEGG" id="sco:SCO5498"/>
<dbReference type="PATRIC" id="fig|100226.15.peg.5582"/>
<dbReference type="eggNOG" id="COG0721">
    <property type="taxonomic scope" value="Bacteria"/>
</dbReference>
<dbReference type="HOGENOM" id="CLU_105899_1_0_11"/>
<dbReference type="InParanoid" id="Q9Z581"/>
<dbReference type="OrthoDB" id="5295223at2"/>
<dbReference type="PhylomeDB" id="Q9Z581"/>
<dbReference type="Proteomes" id="UP000001973">
    <property type="component" value="Chromosome"/>
</dbReference>
<dbReference type="GO" id="GO:0050566">
    <property type="term" value="F:asparaginyl-tRNA synthase (glutamine-hydrolyzing) activity"/>
    <property type="evidence" value="ECO:0007669"/>
    <property type="project" value="RHEA"/>
</dbReference>
<dbReference type="GO" id="GO:0005524">
    <property type="term" value="F:ATP binding"/>
    <property type="evidence" value="ECO:0007669"/>
    <property type="project" value="UniProtKB-KW"/>
</dbReference>
<dbReference type="GO" id="GO:0050567">
    <property type="term" value="F:glutaminyl-tRNA synthase (glutamine-hydrolyzing) activity"/>
    <property type="evidence" value="ECO:0007669"/>
    <property type="project" value="UniProtKB-UniRule"/>
</dbReference>
<dbReference type="GO" id="GO:0070681">
    <property type="term" value="P:glutaminyl-tRNAGln biosynthesis via transamidation"/>
    <property type="evidence" value="ECO:0000318"/>
    <property type="project" value="GO_Central"/>
</dbReference>
<dbReference type="GO" id="GO:0006450">
    <property type="term" value="P:regulation of translational fidelity"/>
    <property type="evidence" value="ECO:0007669"/>
    <property type="project" value="InterPro"/>
</dbReference>
<dbReference type="GO" id="GO:0006412">
    <property type="term" value="P:translation"/>
    <property type="evidence" value="ECO:0007669"/>
    <property type="project" value="UniProtKB-UniRule"/>
</dbReference>
<dbReference type="Gene3D" id="1.10.20.60">
    <property type="entry name" value="Glu-tRNAGln amidotransferase C subunit, N-terminal domain"/>
    <property type="match status" value="1"/>
</dbReference>
<dbReference type="HAMAP" id="MF_00122">
    <property type="entry name" value="GatC"/>
    <property type="match status" value="1"/>
</dbReference>
<dbReference type="InterPro" id="IPR036113">
    <property type="entry name" value="Asp/Glu-ADT_sf_sub_c"/>
</dbReference>
<dbReference type="InterPro" id="IPR003837">
    <property type="entry name" value="GatC"/>
</dbReference>
<dbReference type="NCBIfam" id="TIGR00135">
    <property type="entry name" value="gatC"/>
    <property type="match status" value="1"/>
</dbReference>
<dbReference type="PANTHER" id="PTHR15004">
    <property type="entry name" value="GLUTAMYL-TRNA(GLN) AMIDOTRANSFERASE SUBUNIT C, MITOCHONDRIAL"/>
    <property type="match status" value="1"/>
</dbReference>
<dbReference type="PANTHER" id="PTHR15004:SF0">
    <property type="entry name" value="GLUTAMYL-TRNA(GLN) AMIDOTRANSFERASE SUBUNIT C, MITOCHONDRIAL"/>
    <property type="match status" value="1"/>
</dbReference>
<dbReference type="Pfam" id="PF02686">
    <property type="entry name" value="GatC"/>
    <property type="match status" value="1"/>
</dbReference>
<dbReference type="SUPFAM" id="SSF141000">
    <property type="entry name" value="Glu-tRNAGln amidotransferase C subunit"/>
    <property type="match status" value="1"/>
</dbReference>